<feature type="chain" id="PRO_0000184727" description="Pyrrolidone-carboxylate peptidase 2">
    <location>
        <begin position="1"/>
        <end position="218"/>
    </location>
</feature>
<feature type="active site" evidence="1">
    <location>
        <position position="83"/>
    </location>
</feature>
<feature type="active site" evidence="1">
    <location>
        <position position="146"/>
    </location>
</feature>
<feature type="active site" evidence="1">
    <location>
        <position position="170"/>
    </location>
</feature>
<sequence length="218" mass="23158">MTTQKTVLITGFEPFGKETINPSWEAAKQLQGRELCGARVEARQLPCVFDVSLACLYAAIDDVQPDLVIAVGQAGGRPNITVERVAININDASIPDNQGNQPINTPIVATGPAAYFATLPINAIVKGLRDAGVPASISQTAGTFVCNHVMYGLLHHLACIYPEIRGGVLHIPYLPEQAARYSGTPSMALETVITALEIAIDEALKNSEDIANNGDTAH</sequence>
<name>PCP2_PHOLL</name>
<accession>Q7MZ76</accession>
<dbReference type="EC" id="3.4.19.3" evidence="1"/>
<dbReference type="EMBL" id="BX571873">
    <property type="protein sequence ID" value="CAE16790.1"/>
    <property type="molecule type" value="Genomic_DNA"/>
</dbReference>
<dbReference type="RefSeq" id="WP_011148508.1">
    <property type="nucleotide sequence ID" value="NC_005126.1"/>
</dbReference>
<dbReference type="SMR" id="Q7MZ76"/>
<dbReference type="STRING" id="243265.plu4418"/>
<dbReference type="MEROPS" id="C15.001"/>
<dbReference type="GeneID" id="48850633"/>
<dbReference type="KEGG" id="plu:plu4418"/>
<dbReference type="eggNOG" id="COG2039">
    <property type="taxonomic scope" value="Bacteria"/>
</dbReference>
<dbReference type="HOGENOM" id="CLU_043960_4_0_6"/>
<dbReference type="OrthoDB" id="9779738at2"/>
<dbReference type="Proteomes" id="UP000002514">
    <property type="component" value="Chromosome"/>
</dbReference>
<dbReference type="GO" id="GO:0005829">
    <property type="term" value="C:cytosol"/>
    <property type="evidence" value="ECO:0007669"/>
    <property type="project" value="InterPro"/>
</dbReference>
<dbReference type="GO" id="GO:0016920">
    <property type="term" value="F:pyroglutamyl-peptidase activity"/>
    <property type="evidence" value="ECO:0007669"/>
    <property type="project" value="UniProtKB-UniRule"/>
</dbReference>
<dbReference type="GO" id="GO:0006508">
    <property type="term" value="P:proteolysis"/>
    <property type="evidence" value="ECO:0007669"/>
    <property type="project" value="UniProtKB-KW"/>
</dbReference>
<dbReference type="CDD" id="cd00501">
    <property type="entry name" value="Peptidase_C15"/>
    <property type="match status" value="1"/>
</dbReference>
<dbReference type="FunFam" id="3.40.630.20:FF:000001">
    <property type="entry name" value="Pyrrolidone-carboxylate peptidase"/>
    <property type="match status" value="1"/>
</dbReference>
<dbReference type="Gene3D" id="3.40.630.20">
    <property type="entry name" value="Peptidase C15, pyroglutamyl peptidase I-like"/>
    <property type="match status" value="1"/>
</dbReference>
<dbReference type="HAMAP" id="MF_00417">
    <property type="entry name" value="Pyrrolid_peptidase"/>
    <property type="match status" value="1"/>
</dbReference>
<dbReference type="InterPro" id="IPR000816">
    <property type="entry name" value="Peptidase_C15"/>
</dbReference>
<dbReference type="InterPro" id="IPR016125">
    <property type="entry name" value="Peptidase_C15-like"/>
</dbReference>
<dbReference type="InterPro" id="IPR036440">
    <property type="entry name" value="Peptidase_C15-like_sf"/>
</dbReference>
<dbReference type="InterPro" id="IPR029762">
    <property type="entry name" value="PGP-I_bact-type"/>
</dbReference>
<dbReference type="InterPro" id="IPR033694">
    <property type="entry name" value="PGPEP1_Cys_AS"/>
</dbReference>
<dbReference type="InterPro" id="IPR033693">
    <property type="entry name" value="PGPEP1_Glu_AS"/>
</dbReference>
<dbReference type="NCBIfam" id="NF009676">
    <property type="entry name" value="PRK13197.1"/>
    <property type="match status" value="1"/>
</dbReference>
<dbReference type="NCBIfam" id="TIGR00504">
    <property type="entry name" value="pyro_pdase"/>
    <property type="match status" value="1"/>
</dbReference>
<dbReference type="PANTHER" id="PTHR23402">
    <property type="entry name" value="PROTEASE FAMILY C15 PYROGLUTAMYL-PEPTIDASE I-RELATED"/>
    <property type="match status" value="1"/>
</dbReference>
<dbReference type="PANTHER" id="PTHR23402:SF1">
    <property type="entry name" value="PYROGLUTAMYL-PEPTIDASE I"/>
    <property type="match status" value="1"/>
</dbReference>
<dbReference type="Pfam" id="PF01470">
    <property type="entry name" value="Peptidase_C15"/>
    <property type="match status" value="1"/>
</dbReference>
<dbReference type="PIRSF" id="PIRSF015592">
    <property type="entry name" value="Prld-crbxl_pptds"/>
    <property type="match status" value="1"/>
</dbReference>
<dbReference type="PRINTS" id="PR00706">
    <property type="entry name" value="PYROGLUPTASE"/>
</dbReference>
<dbReference type="SUPFAM" id="SSF53182">
    <property type="entry name" value="Pyrrolidone carboxyl peptidase (pyroglutamate aminopeptidase)"/>
    <property type="match status" value="1"/>
</dbReference>
<dbReference type="PROSITE" id="PS01334">
    <property type="entry name" value="PYRASE_CYS"/>
    <property type="match status" value="1"/>
</dbReference>
<dbReference type="PROSITE" id="PS01333">
    <property type="entry name" value="PYRASE_GLU"/>
    <property type="match status" value="1"/>
</dbReference>
<evidence type="ECO:0000255" key="1">
    <source>
        <dbReference type="HAMAP-Rule" id="MF_00417"/>
    </source>
</evidence>
<protein>
    <recommendedName>
        <fullName evidence="1">Pyrrolidone-carboxylate peptidase 2</fullName>
        <ecNumber evidence="1">3.4.19.3</ecNumber>
    </recommendedName>
    <alternativeName>
        <fullName evidence="1">5-oxoprolyl-peptidase 2</fullName>
    </alternativeName>
    <alternativeName>
        <fullName evidence="1">Pyroglutamyl-peptidase I 2</fullName>
        <shortName evidence="1">PGP-I 2</shortName>
        <shortName evidence="1">Pyrase 2</shortName>
    </alternativeName>
</protein>
<keyword id="KW-0963">Cytoplasm</keyword>
<keyword id="KW-0378">Hydrolase</keyword>
<keyword id="KW-0645">Protease</keyword>
<keyword id="KW-1185">Reference proteome</keyword>
<keyword id="KW-0788">Thiol protease</keyword>
<organism>
    <name type="scientific">Photorhabdus laumondii subsp. laumondii (strain DSM 15139 / CIP 105565 / TT01)</name>
    <name type="common">Photorhabdus luminescens subsp. laumondii</name>
    <dbReference type="NCBI Taxonomy" id="243265"/>
    <lineage>
        <taxon>Bacteria</taxon>
        <taxon>Pseudomonadati</taxon>
        <taxon>Pseudomonadota</taxon>
        <taxon>Gammaproteobacteria</taxon>
        <taxon>Enterobacterales</taxon>
        <taxon>Morganellaceae</taxon>
        <taxon>Photorhabdus</taxon>
    </lineage>
</organism>
<comment type="function">
    <text evidence="1">Removes 5-oxoproline from various penultimate amino acid residues except L-proline.</text>
</comment>
<comment type="catalytic activity">
    <reaction evidence="1">
        <text>Release of an N-terminal pyroglutamyl group from a polypeptide, the second amino acid generally not being Pro.</text>
        <dbReference type="EC" id="3.4.19.3"/>
    </reaction>
</comment>
<comment type="subunit">
    <text evidence="1">Homotetramer.</text>
</comment>
<comment type="subcellular location">
    <subcellularLocation>
        <location evidence="1">Cytoplasm</location>
    </subcellularLocation>
</comment>
<comment type="similarity">
    <text evidence="1">Belongs to the peptidase C15 family.</text>
</comment>
<proteinExistence type="inferred from homology"/>
<gene>
    <name evidence="1" type="primary">pcp2</name>
    <name type="ordered locus">plu4418</name>
</gene>
<reference key="1">
    <citation type="journal article" date="2003" name="Nat. Biotechnol.">
        <title>The genome sequence of the entomopathogenic bacterium Photorhabdus luminescens.</title>
        <authorList>
            <person name="Duchaud E."/>
            <person name="Rusniok C."/>
            <person name="Frangeul L."/>
            <person name="Buchrieser C."/>
            <person name="Givaudan A."/>
            <person name="Taourit S."/>
            <person name="Bocs S."/>
            <person name="Boursaux-Eude C."/>
            <person name="Chandler M."/>
            <person name="Charles J.-F."/>
            <person name="Dassa E."/>
            <person name="Derose R."/>
            <person name="Derzelle S."/>
            <person name="Freyssinet G."/>
            <person name="Gaudriault S."/>
            <person name="Medigue C."/>
            <person name="Lanois A."/>
            <person name="Powell K."/>
            <person name="Siguier P."/>
            <person name="Vincent R."/>
            <person name="Wingate V."/>
            <person name="Zouine M."/>
            <person name="Glaser P."/>
            <person name="Boemare N."/>
            <person name="Danchin A."/>
            <person name="Kunst F."/>
        </authorList>
    </citation>
    <scope>NUCLEOTIDE SEQUENCE [LARGE SCALE GENOMIC DNA]</scope>
    <source>
        <strain>DSM 15139 / CIP 105565 / TT01</strain>
    </source>
</reference>